<gene>
    <name type="primary">TOS6</name>
    <name type="ORF">EC1118_1N9_0353g</name>
</gene>
<proteinExistence type="inferred from homology"/>
<comment type="subcellular location">
    <subcellularLocation>
        <location evidence="3">Secreted</location>
        <location evidence="3">Cell wall</location>
    </subcellularLocation>
    <subcellularLocation>
        <location evidence="3">Membrane</location>
        <topology evidence="3">Lipid-anchor</topology>
        <topology evidence="3">GPI-anchor</topology>
    </subcellularLocation>
</comment>
<comment type="PTM">
    <text evidence="1">The GPI-anchor is attached to the protein in the endoplasmic reticulum and serves to target the protein to the cell surface. There, the glucosamine-inositol phospholipid moiety is cleaved off and the GPI-modified mannoprotein is covalently attached via its lipidless GPI glycan remnant to the 1,6-beta-glucan of the outer cell wall layer (By similarity).</text>
</comment>
<comment type="similarity">
    <text evidence="3">Belongs to the TOS6 family.</text>
</comment>
<keyword id="KW-0134">Cell wall</keyword>
<keyword id="KW-0325">Glycoprotein</keyword>
<keyword id="KW-0336">GPI-anchor</keyword>
<keyword id="KW-0449">Lipoprotein</keyword>
<keyword id="KW-0472">Membrane</keyword>
<keyword id="KW-0964">Secreted</keyword>
<keyword id="KW-0732">Signal</keyword>
<reference key="1">
    <citation type="journal article" date="2009" name="Proc. Natl. Acad. Sci. U.S.A.">
        <title>Eukaryote-to-eukaryote gene transfer events revealed by the genome sequence of the wine yeast Saccharomyces cerevisiae EC1118.</title>
        <authorList>
            <person name="Novo M."/>
            <person name="Bigey F."/>
            <person name="Beyne E."/>
            <person name="Galeote V."/>
            <person name="Gavory F."/>
            <person name="Mallet S."/>
            <person name="Cambon B."/>
            <person name="Legras J.-L."/>
            <person name="Wincker P."/>
            <person name="Casaregola S."/>
            <person name="Dequin S."/>
        </authorList>
    </citation>
    <scope>NUCLEOTIDE SEQUENCE [LARGE SCALE GENOMIC DNA]</scope>
    <source>
        <strain>Lalvin EC1118 / Prise de mousse</strain>
    </source>
</reference>
<organism>
    <name type="scientific">Saccharomyces cerevisiae (strain Lalvin EC1118 / Prise de mousse)</name>
    <name type="common">Baker's yeast</name>
    <dbReference type="NCBI Taxonomy" id="643680"/>
    <lineage>
        <taxon>Eukaryota</taxon>
        <taxon>Fungi</taxon>
        <taxon>Dikarya</taxon>
        <taxon>Ascomycota</taxon>
        <taxon>Saccharomycotina</taxon>
        <taxon>Saccharomycetes</taxon>
        <taxon>Saccharomycetales</taxon>
        <taxon>Saccharomycetaceae</taxon>
        <taxon>Saccharomyces</taxon>
    </lineage>
</organism>
<dbReference type="EMBL" id="FN393086">
    <property type="protein sequence ID" value="CAY82313.1"/>
    <property type="molecule type" value="Genomic_DNA"/>
</dbReference>
<dbReference type="GlyCosmos" id="C8ZGM3">
    <property type="glycosylation" value="1 site, No reported glycans"/>
</dbReference>
<dbReference type="HOGENOM" id="CLU_2279081_0_0_1"/>
<dbReference type="Proteomes" id="UP000000286">
    <property type="component" value="Chromosome XIV, Scaffold EC1118_1N9"/>
</dbReference>
<dbReference type="GO" id="GO:0005576">
    <property type="term" value="C:extracellular region"/>
    <property type="evidence" value="ECO:0007669"/>
    <property type="project" value="UniProtKB-KW"/>
</dbReference>
<dbReference type="GO" id="GO:0098552">
    <property type="term" value="C:side of membrane"/>
    <property type="evidence" value="ECO:0007669"/>
    <property type="project" value="UniProtKB-KW"/>
</dbReference>
<dbReference type="CDD" id="cd22955">
    <property type="entry name" value="TOS6"/>
    <property type="match status" value="1"/>
</dbReference>
<evidence type="ECO:0000250" key="1"/>
<evidence type="ECO:0000255" key="2"/>
<evidence type="ECO:0000305" key="3"/>
<sequence length="102" mass="10170">MKFSTLSTVAAIAAFASADSTSDGVTYVDVTTTPQSTTSMVSTVKTTSTPYTTSTIATLSTKSISSQANTTTHEISTYVGAAVKGSVAGMGAIMGAAAFALL</sequence>
<protein>
    <recommendedName>
        <fullName>Protein TOS6</fullName>
    </recommendedName>
</protein>
<name>TOS6_YEAS8</name>
<accession>C8ZGM3</accession>
<feature type="signal peptide" evidence="2">
    <location>
        <begin position="1"/>
        <end position="18"/>
    </location>
</feature>
<feature type="chain" id="PRO_0000402242" description="Protein TOS6">
    <location>
        <begin position="19"/>
        <end position="80"/>
    </location>
</feature>
<feature type="propeptide" id="PRO_0000402243" description="Removed in mature form" evidence="2">
    <location>
        <begin position="81"/>
        <end position="102"/>
    </location>
</feature>
<feature type="lipid moiety-binding region" description="GPI-anchor amidated glycine" evidence="2">
    <location>
        <position position="80"/>
    </location>
</feature>
<feature type="glycosylation site" description="N-linked (GlcNAc...) asparagine" evidence="2">
    <location>
        <position position="69"/>
    </location>
</feature>